<comment type="function">
    <text evidence="1 8">Visual pigments are the light-absorbing molecules that mediate vision. They consist of an apoprotein, opsin, covalently linked to cis-retinal. May play a role in photoperiodic photoreception.</text>
</comment>
<comment type="subcellular location">
    <subcellularLocation>
        <location evidence="2">Membrane</location>
        <topology evidence="2">Multi-pass membrane protein</topology>
    </subcellularLocation>
</comment>
<comment type="tissue specificity">
    <text evidence="5">In the retina, expression is essentially uniformly distributed, but a higher level is seen in the dorsal region of the retina and in the dorsal rim retinulae.</text>
</comment>
<comment type="similarity">
    <text evidence="3">Belongs to the G-protein coupled receptor 1 family. Opsin subfamily.</text>
</comment>
<protein>
    <recommendedName>
        <fullName>Opsin-2</fullName>
        <shortName evidence="7">MANOP2</shortName>
    </recommendedName>
    <alternativeName>
        <fullName evidence="7">Rhodopsin 2, short-wavelength</fullName>
    </alternativeName>
    <alternativeName>
        <fullName evidence="6">Rhodopsin P357</fullName>
    </alternativeName>
</protein>
<evidence type="ECO:0000250" key="1">
    <source>
        <dbReference type="UniProtKB" id="Q95YI3"/>
    </source>
</evidence>
<evidence type="ECO:0000255" key="2"/>
<evidence type="ECO:0000255" key="3">
    <source>
        <dbReference type="PROSITE-ProRule" id="PRU00521"/>
    </source>
</evidence>
<evidence type="ECO:0000256" key="4">
    <source>
        <dbReference type="SAM" id="MobiDB-lite"/>
    </source>
</evidence>
<evidence type="ECO:0000269" key="5">
    <source>
    </source>
</evidence>
<evidence type="ECO:0000303" key="6">
    <source>
    </source>
</evidence>
<evidence type="ECO:0000303" key="7">
    <source>
    </source>
</evidence>
<evidence type="ECO:0000305" key="8"/>
<evidence type="ECO:0000312" key="9">
    <source>
        <dbReference type="EMBL" id="AAD11965.1"/>
    </source>
</evidence>
<keyword id="KW-0157">Chromophore</keyword>
<keyword id="KW-1015">Disulfide bond</keyword>
<keyword id="KW-0297">G-protein coupled receptor</keyword>
<keyword id="KW-0325">Glycoprotein</keyword>
<keyword id="KW-0472">Membrane</keyword>
<keyword id="KW-0600">Photoreceptor protein</keyword>
<keyword id="KW-0675">Receptor</keyword>
<keyword id="KW-0681">Retinal protein</keyword>
<keyword id="KW-0716">Sensory transduction</keyword>
<keyword id="KW-0807">Transducer</keyword>
<keyword id="KW-0812">Transmembrane</keyword>
<keyword id="KW-1133">Transmembrane helix</keyword>
<keyword id="KW-0844">Vision</keyword>
<proteinExistence type="evidence at transcript level"/>
<gene>
    <name type="primary">OP2</name>
</gene>
<name>OPS2_MANSE</name>
<feature type="chain" id="PRO_0000389623" description="Opsin-2">
    <location>
        <begin position="1"/>
        <end position="377"/>
    </location>
</feature>
<feature type="topological domain" description="Extracellular" evidence="2">
    <location>
        <begin position="1"/>
        <end position="57"/>
    </location>
</feature>
<feature type="transmembrane region" description="Helical; Name=1" evidence="2">
    <location>
        <begin position="58"/>
        <end position="78"/>
    </location>
</feature>
<feature type="topological domain" description="Cytoplasmic" evidence="2">
    <location>
        <begin position="79"/>
        <end position="89"/>
    </location>
</feature>
<feature type="transmembrane region" description="Helical; Name=2" evidence="2">
    <location>
        <begin position="90"/>
        <end position="110"/>
    </location>
</feature>
<feature type="topological domain" description="Extracellular" evidence="2">
    <location>
        <begin position="111"/>
        <end position="126"/>
    </location>
</feature>
<feature type="transmembrane region" description="Helical; Name=3" evidence="2">
    <location>
        <begin position="127"/>
        <end position="146"/>
    </location>
</feature>
<feature type="topological domain" description="Cytoplasmic" evidence="2">
    <location>
        <begin position="147"/>
        <end position="166"/>
    </location>
</feature>
<feature type="transmembrane region" description="Helical; Name=4" evidence="2">
    <location>
        <begin position="167"/>
        <end position="187"/>
    </location>
</feature>
<feature type="topological domain" description="Extracellular" evidence="2">
    <location>
        <begin position="188"/>
        <end position="214"/>
    </location>
</feature>
<feature type="transmembrane region" description="Helical; Name=5" evidence="2">
    <location>
        <begin position="215"/>
        <end position="235"/>
    </location>
</feature>
<feature type="topological domain" description="Cytoplasmic" evidence="2">
    <location>
        <begin position="236"/>
        <end position="283"/>
    </location>
</feature>
<feature type="transmembrane region" description="Helical; Name=6" evidence="2">
    <location>
        <begin position="284"/>
        <end position="304"/>
    </location>
</feature>
<feature type="topological domain" description="Extracellular" evidence="2">
    <location>
        <begin position="305"/>
        <end position="314"/>
    </location>
</feature>
<feature type="transmembrane region" description="Helical; Name=7" evidence="2">
    <location>
        <begin position="315"/>
        <end position="335"/>
    </location>
</feature>
<feature type="topological domain" description="Cytoplasmic" evidence="2">
    <location>
        <begin position="336"/>
        <end position="377"/>
    </location>
</feature>
<feature type="region of interest" description="Disordered" evidence="4">
    <location>
        <begin position="355"/>
        <end position="377"/>
    </location>
</feature>
<feature type="compositionally biased region" description="Low complexity" evidence="4">
    <location>
        <begin position="361"/>
        <end position="377"/>
    </location>
</feature>
<feature type="glycosylation site" description="N-linked (GlcNAc...) asparagine" evidence="2">
    <location>
        <position position="3"/>
    </location>
</feature>
<feature type="disulfide bond" evidence="3">
    <location>
        <begin position="125"/>
        <end position="202"/>
    </location>
</feature>
<organism>
    <name type="scientific">Manduca sexta</name>
    <name type="common">Tobacco hawkmoth</name>
    <name type="synonym">Tobacco hornworm</name>
    <dbReference type="NCBI Taxonomy" id="7130"/>
    <lineage>
        <taxon>Eukaryota</taxon>
        <taxon>Metazoa</taxon>
        <taxon>Ecdysozoa</taxon>
        <taxon>Arthropoda</taxon>
        <taxon>Hexapoda</taxon>
        <taxon>Insecta</taxon>
        <taxon>Pterygota</taxon>
        <taxon>Neoptera</taxon>
        <taxon>Endopterygota</taxon>
        <taxon>Lepidoptera</taxon>
        <taxon>Glossata</taxon>
        <taxon>Ditrysia</taxon>
        <taxon>Bombycoidea</taxon>
        <taxon>Sphingidae</taxon>
        <taxon>Sphinginae</taxon>
        <taxon>Sphingini</taxon>
        <taxon>Manduca</taxon>
    </lineage>
</organism>
<dbReference type="EMBL" id="L78081">
    <property type="protein sequence ID" value="AAD11965.1"/>
    <property type="molecule type" value="mRNA"/>
</dbReference>
<dbReference type="SMR" id="O02465"/>
<dbReference type="GlyCosmos" id="O02465">
    <property type="glycosylation" value="1 site, No reported glycans"/>
</dbReference>
<dbReference type="OrthoDB" id="2105199at2759"/>
<dbReference type="GO" id="GO:0016020">
    <property type="term" value="C:membrane"/>
    <property type="evidence" value="ECO:0007669"/>
    <property type="project" value="UniProtKB-SubCell"/>
</dbReference>
<dbReference type="GO" id="GO:0004930">
    <property type="term" value="F:G protein-coupled receptor activity"/>
    <property type="evidence" value="ECO:0007669"/>
    <property type="project" value="UniProtKB-KW"/>
</dbReference>
<dbReference type="GO" id="GO:0009881">
    <property type="term" value="F:photoreceptor activity"/>
    <property type="evidence" value="ECO:0007669"/>
    <property type="project" value="UniProtKB-KW"/>
</dbReference>
<dbReference type="GO" id="GO:0007602">
    <property type="term" value="P:phototransduction"/>
    <property type="evidence" value="ECO:0007669"/>
    <property type="project" value="UniProtKB-KW"/>
</dbReference>
<dbReference type="GO" id="GO:0007601">
    <property type="term" value="P:visual perception"/>
    <property type="evidence" value="ECO:0007669"/>
    <property type="project" value="UniProtKB-KW"/>
</dbReference>
<dbReference type="CDD" id="cd15079">
    <property type="entry name" value="7tmA_photoreceptors_insect"/>
    <property type="match status" value="1"/>
</dbReference>
<dbReference type="FunFam" id="1.20.1070.10:FF:000044">
    <property type="entry name" value="Opsin, ultraviolet-sensitive"/>
    <property type="match status" value="1"/>
</dbReference>
<dbReference type="Gene3D" id="1.20.1070.10">
    <property type="entry name" value="Rhodopsin 7-helix transmembrane proteins"/>
    <property type="match status" value="1"/>
</dbReference>
<dbReference type="InterPro" id="IPR050125">
    <property type="entry name" value="GPCR_opsins"/>
</dbReference>
<dbReference type="InterPro" id="IPR000276">
    <property type="entry name" value="GPCR_Rhodpsn"/>
</dbReference>
<dbReference type="InterPro" id="IPR017452">
    <property type="entry name" value="GPCR_Rhodpsn_7TM"/>
</dbReference>
<dbReference type="InterPro" id="IPR001760">
    <property type="entry name" value="Opsin"/>
</dbReference>
<dbReference type="PANTHER" id="PTHR24240">
    <property type="entry name" value="OPSIN"/>
    <property type="match status" value="1"/>
</dbReference>
<dbReference type="Pfam" id="PF00001">
    <property type="entry name" value="7tm_1"/>
    <property type="match status" value="1"/>
</dbReference>
<dbReference type="PRINTS" id="PR00237">
    <property type="entry name" value="GPCRRHODOPSN"/>
</dbReference>
<dbReference type="PRINTS" id="PR00577">
    <property type="entry name" value="OPSINRH3RH4"/>
</dbReference>
<dbReference type="SUPFAM" id="SSF81321">
    <property type="entry name" value="Family A G protein-coupled receptor-like"/>
    <property type="match status" value="1"/>
</dbReference>
<dbReference type="PROSITE" id="PS00237">
    <property type="entry name" value="G_PROTEIN_RECEP_F1_1"/>
    <property type="match status" value="1"/>
</dbReference>
<dbReference type="PROSITE" id="PS50262">
    <property type="entry name" value="G_PROTEIN_RECEP_F1_2"/>
    <property type="match status" value="1"/>
</dbReference>
<accession>O02465</accession>
<sequence>MNNQSENYYHGAQFEALKSAGAIEMLGDGLTGDDLAAIPEHWLSYPAPPASAHTALALLYIFFTFAALVGNGMVIFIFSTTKSLRTSSNFLVLNLAILDFIMMAKAPIFIYNSAMRGFAVGTVGCQIFALMGAYSGIGAGMTNACIAYDRHSTITRPLDGRLSEGKVLLMVAFVWIYSTPWALLPLLKIWGRYVPEGYLTSCSFDYLTNTFDTKLFVACIFTCSYVFPMSLIIYFYSGIVKQVFAHEAALREQAKKMNVESLRANQGGSSESAEIRIAKAALTVCFLFVASWTPYGVMALIGAFGNQQLLTPGVTMIPAVACKAVACISPWVYAIRHPMYRQELQRRMPWLQIDEPDDTVSTATSNTTNSAPPAATA</sequence>
<reference evidence="9" key="1">
    <citation type="journal article" date="1997" name="J. Exp. Biol.">
        <title>Three opsin-encoding cDNAS from the compound eye of Manduca sexta.</title>
        <authorList>
            <person name="Chase M.R."/>
            <person name="Bennett R.R."/>
            <person name="White R.H."/>
        </authorList>
    </citation>
    <scope>NUCLEOTIDE SEQUENCE [MRNA]</scope>
    <source>
        <tissue evidence="9">Retina</tissue>
    </source>
</reference>
<reference evidence="8" key="2">
    <citation type="journal article" date="2003" name="J. Exp. Biol.">
        <title>The retina of Manduca sexta: rhodopsin expression, the mosaic of green-, blue- and UV-sensitive photoreceptors, and regional specialization.</title>
        <authorList>
            <person name="White R.H."/>
            <person name="Xu H."/>
            <person name="Munch T.A."/>
            <person name="Bennett R.R."/>
            <person name="Grable E.A."/>
        </authorList>
    </citation>
    <scope>TISSUE SPECIFICITY</scope>
    <source>
        <tissue evidence="5">Retina</tissue>
    </source>
</reference>